<reference key="1">
    <citation type="journal article" date="2004" name="Proc. Natl. Acad. Sci. U.S.A.">
        <title>Genome sequence of Picrophilus torridus and its implications for life around pH 0.</title>
        <authorList>
            <person name="Fuetterer O."/>
            <person name="Angelov A."/>
            <person name="Liesegang H."/>
            <person name="Gottschalk G."/>
            <person name="Schleper C."/>
            <person name="Schepers B."/>
            <person name="Dock C."/>
            <person name="Antranikian G."/>
            <person name="Liebl W."/>
        </authorList>
    </citation>
    <scope>NUCLEOTIDE SEQUENCE [LARGE SCALE GENOMIC DNA]</scope>
    <source>
        <strain>ATCC 700027 / DSM 9790 / JCM 10055 / NBRC 100828 / KAW 2/3</strain>
    </source>
</reference>
<gene>
    <name evidence="1" type="primary">gdh1</name>
    <name type="ordered locus">PTO0639</name>
</gene>
<comment type="function">
    <text evidence="1">Catalyzes the NAD(P)(+)-dependent oxidation of D-glucose to D-gluconate via gluconolactone. Can utilize both NAD(+) and NADP(+) as electron acceptor. Is involved in the degradation of glucose through a non-phosphorylative variant of the Entner-Doudoroff pathway.</text>
</comment>
<comment type="catalytic activity">
    <reaction evidence="1">
        <text>D-glucose + NAD(+) = D-glucono-1,5-lactone + NADH + H(+)</text>
        <dbReference type="Rhea" id="RHEA:14293"/>
        <dbReference type="ChEBI" id="CHEBI:4167"/>
        <dbReference type="ChEBI" id="CHEBI:15378"/>
        <dbReference type="ChEBI" id="CHEBI:16217"/>
        <dbReference type="ChEBI" id="CHEBI:57540"/>
        <dbReference type="ChEBI" id="CHEBI:57945"/>
        <dbReference type="EC" id="1.1.1.47"/>
    </reaction>
</comment>
<comment type="catalytic activity">
    <reaction evidence="1">
        <text>D-glucose + NADP(+) = D-glucono-1,5-lactone + NADPH + H(+)</text>
        <dbReference type="Rhea" id="RHEA:14405"/>
        <dbReference type="ChEBI" id="CHEBI:4167"/>
        <dbReference type="ChEBI" id="CHEBI:15378"/>
        <dbReference type="ChEBI" id="CHEBI:16217"/>
        <dbReference type="ChEBI" id="CHEBI:57783"/>
        <dbReference type="ChEBI" id="CHEBI:58349"/>
        <dbReference type="EC" id="1.1.1.47"/>
    </reaction>
</comment>
<comment type="cofactor">
    <cofactor evidence="1">
        <name>Zn(2+)</name>
        <dbReference type="ChEBI" id="CHEBI:29105"/>
    </cofactor>
    <text evidence="1">Binds 2 Zn(2+) ions per subunit. One of the zinc atoms is essential for catalytic activity while the other has a structural function.</text>
</comment>
<comment type="similarity">
    <text evidence="1">Belongs to the zinc-containing alcohol dehydrogenase family. Glucose 1-dehydrogenase subfamily.</text>
</comment>
<protein>
    <recommendedName>
        <fullName evidence="1">Glucose 1-dehydrogenase 1</fullName>
        <shortName evidence="1">GDH 1</shortName>
        <shortName evidence="1">GlcDH 1</shortName>
        <ecNumber evidence="1">1.1.1.47</ecNumber>
    </recommendedName>
</protein>
<organism>
    <name type="scientific">Picrophilus torridus (strain ATCC 700027 / DSM 9790 / JCM 10055 / NBRC 100828 / KAW 2/3)</name>
    <dbReference type="NCBI Taxonomy" id="1122961"/>
    <lineage>
        <taxon>Archaea</taxon>
        <taxon>Methanobacteriati</taxon>
        <taxon>Thermoplasmatota</taxon>
        <taxon>Thermoplasmata</taxon>
        <taxon>Thermoplasmatales</taxon>
        <taxon>Picrophilaceae</taxon>
        <taxon>Picrophilus</taxon>
    </lineage>
</organism>
<sequence length="352" mass="39284">MKAIIVHPPGAGVSIEDVNINGNGPGIKILENGICGTDREIVNGELSAATSLNGFLVLGHEALGILEEDTKNLRKGDLVMPINRRGCGRCLNCMLGRPDFCETGEQLEAGISGMHGFMREYINDDERYLVKVPDVIRDIAIMAQPLADLEKSIEEMISIQKRLHWPCIDGTYNCRKVLITGTGTIGILFAMLLKTYGFSVYISNKREPNDIESKIFDELSVKYKNLSNKIDESFDAIIEASGSGTDVIERTLPLLKNNGFYGIFGFEKTGTLNLTSEFLQGIVYKSINITGLINGQKPHMEMAMNHLIQWKKQFPKTTSMMITEKVSINNERRLKEVLSKKRPGEIKIKIIW</sequence>
<keyword id="KW-0119">Carbohydrate metabolism</keyword>
<keyword id="KW-0479">Metal-binding</keyword>
<keyword id="KW-0520">NAD</keyword>
<keyword id="KW-0521">NADP</keyword>
<keyword id="KW-0547">Nucleotide-binding</keyword>
<keyword id="KW-0560">Oxidoreductase</keyword>
<keyword id="KW-0862">Zinc</keyword>
<dbReference type="EC" id="1.1.1.47" evidence="1"/>
<dbReference type="EMBL" id="AE017261">
    <property type="protein sequence ID" value="AAT43224.1"/>
    <property type="molecule type" value="Genomic_DNA"/>
</dbReference>
<dbReference type="RefSeq" id="WP_011177440.1">
    <property type="nucleotide sequence ID" value="NC_005877.1"/>
</dbReference>
<dbReference type="SMR" id="Q6L1C8"/>
<dbReference type="FunCoup" id="Q6L1C8">
    <property type="interactions" value="67"/>
</dbReference>
<dbReference type="STRING" id="263820.PTO0639"/>
<dbReference type="PaxDb" id="263820-PTO0639"/>
<dbReference type="GeneID" id="2844968"/>
<dbReference type="KEGG" id="pto:PTO0639"/>
<dbReference type="PATRIC" id="fig|263820.9.peg.671"/>
<dbReference type="eggNOG" id="arCOG01459">
    <property type="taxonomic scope" value="Archaea"/>
</dbReference>
<dbReference type="HOGENOM" id="CLU_026673_1_0_2"/>
<dbReference type="InParanoid" id="Q6L1C8"/>
<dbReference type="OrthoDB" id="41394at2157"/>
<dbReference type="Proteomes" id="UP000000438">
    <property type="component" value="Chromosome"/>
</dbReference>
<dbReference type="GO" id="GO:0005536">
    <property type="term" value="F:D-glucose binding"/>
    <property type="evidence" value="ECO:0007669"/>
    <property type="project" value="UniProtKB-UniRule"/>
</dbReference>
<dbReference type="GO" id="GO:0047934">
    <property type="term" value="F:glucose 1-dehydrogenase (NAD+) activity"/>
    <property type="evidence" value="ECO:0007669"/>
    <property type="project" value="RHEA"/>
</dbReference>
<dbReference type="GO" id="GO:0047935">
    <property type="term" value="F:glucose 1-dehydrogenase (NADP+) activity"/>
    <property type="evidence" value="ECO:0007669"/>
    <property type="project" value="RHEA"/>
</dbReference>
<dbReference type="GO" id="GO:0070403">
    <property type="term" value="F:NAD+ binding"/>
    <property type="evidence" value="ECO:0007669"/>
    <property type="project" value="UniProtKB-UniRule"/>
</dbReference>
<dbReference type="GO" id="GO:0070401">
    <property type="term" value="F:NADP+ binding"/>
    <property type="evidence" value="ECO:0007669"/>
    <property type="project" value="UniProtKB-UniRule"/>
</dbReference>
<dbReference type="GO" id="GO:0008270">
    <property type="term" value="F:zinc ion binding"/>
    <property type="evidence" value="ECO:0007669"/>
    <property type="project" value="UniProtKB-UniRule"/>
</dbReference>
<dbReference type="GO" id="GO:0019595">
    <property type="term" value="P:non-phosphorylated glucose catabolic process"/>
    <property type="evidence" value="ECO:0007669"/>
    <property type="project" value="UniProtKB-UniRule"/>
</dbReference>
<dbReference type="GO" id="GO:0051262">
    <property type="term" value="P:protein tetramerization"/>
    <property type="evidence" value="ECO:0007669"/>
    <property type="project" value="UniProtKB-ARBA"/>
</dbReference>
<dbReference type="CDD" id="cd08230">
    <property type="entry name" value="glucose_DH"/>
    <property type="match status" value="1"/>
</dbReference>
<dbReference type="Gene3D" id="3.90.180.10">
    <property type="entry name" value="Medium-chain alcohol dehydrogenases, catalytic domain"/>
    <property type="match status" value="1"/>
</dbReference>
<dbReference type="Gene3D" id="3.40.50.720">
    <property type="entry name" value="NAD(P)-binding Rossmann-like Domain"/>
    <property type="match status" value="1"/>
</dbReference>
<dbReference type="HAMAP" id="MF_02127">
    <property type="entry name" value="Glucose_DH"/>
    <property type="match status" value="1"/>
</dbReference>
<dbReference type="InterPro" id="IPR013154">
    <property type="entry name" value="ADH-like_N"/>
</dbReference>
<dbReference type="InterPro" id="IPR026583">
    <property type="entry name" value="Glc_1-DH_arc"/>
</dbReference>
<dbReference type="InterPro" id="IPR031640">
    <property type="entry name" value="Glu_dehyd_C"/>
</dbReference>
<dbReference type="InterPro" id="IPR011032">
    <property type="entry name" value="GroES-like_sf"/>
</dbReference>
<dbReference type="InterPro" id="IPR036291">
    <property type="entry name" value="NAD(P)-bd_dom_sf"/>
</dbReference>
<dbReference type="InterPro" id="IPR050129">
    <property type="entry name" value="Zn_alcohol_dh"/>
</dbReference>
<dbReference type="PANTHER" id="PTHR43401">
    <property type="entry name" value="L-THREONINE 3-DEHYDROGENASE"/>
    <property type="match status" value="1"/>
</dbReference>
<dbReference type="PANTHER" id="PTHR43401:SF2">
    <property type="entry name" value="L-THREONINE 3-DEHYDROGENASE"/>
    <property type="match status" value="1"/>
</dbReference>
<dbReference type="Pfam" id="PF08240">
    <property type="entry name" value="ADH_N"/>
    <property type="match status" value="1"/>
</dbReference>
<dbReference type="Pfam" id="PF16912">
    <property type="entry name" value="Glu_dehyd_C"/>
    <property type="match status" value="1"/>
</dbReference>
<dbReference type="SUPFAM" id="SSF50129">
    <property type="entry name" value="GroES-like"/>
    <property type="match status" value="1"/>
</dbReference>
<dbReference type="SUPFAM" id="SSF51735">
    <property type="entry name" value="NAD(P)-binding Rossmann-fold domains"/>
    <property type="match status" value="1"/>
</dbReference>
<proteinExistence type="inferred from homology"/>
<feature type="chain" id="PRO_0000414838" description="Glucose 1-dehydrogenase 1">
    <location>
        <begin position="1"/>
        <end position="352"/>
    </location>
</feature>
<feature type="binding site" evidence="1">
    <location>
        <position position="35"/>
    </location>
    <ligand>
        <name>Zn(2+)</name>
        <dbReference type="ChEBI" id="CHEBI:29105"/>
        <label>1</label>
        <note>catalytic</note>
    </ligand>
</feature>
<feature type="binding site" evidence="1">
    <location>
        <position position="37"/>
    </location>
    <ligand>
        <name>substrate</name>
    </ligand>
</feature>
<feature type="binding site" evidence="1">
    <location>
        <position position="60"/>
    </location>
    <ligand>
        <name>Zn(2+)</name>
        <dbReference type="ChEBI" id="CHEBI:29105"/>
        <label>1</label>
        <note>catalytic</note>
    </ligand>
</feature>
<feature type="binding site" evidence="1">
    <location>
        <position position="61"/>
    </location>
    <ligand>
        <name>Zn(2+)</name>
        <dbReference type="ChEBI" id="CHEBI:29105"/>
        <label>1</label>
        <note>catalytic</note>
    </ligand>
</feature>
<feature type="binding site" evidence="1">
    <location>
        <position position="83"/>
    </location>
    <ligand>
        <name>substrate</name>
    </ligand>
</feature>
<feature type="binding site" evidence="1">
    <location>
        <position position="87"/>
    </location>
    <ligand>
        <name>Zn(2+)</name>
        <dbReference type="ChEBI" id="CHEBI:29105"/>
        <label>2</label>
        <note>structural</note>
    </ligand>
</feature>
<feature type="binding site" evidence="1">
    <location>
        <position position="90"/>
    </location>
    <ligand>
        <name>Zn(2+)</name>
        <dbReference type="ChEBI" id="CHEBI:29105"/>
        <label>2</label>
        <note>structural</note>
    </ligand>
</feature>
<feature type="binding site" evidence="1">
    <location>
        <position position="93"/>
    </location>
    <ligand>
        <name>Zn(2+)</name>
        <dbReference type="ChEBI" id="CHEBI:29105"/>
        <label>2</label>
        <note>structural</note>
    </ligand>
</feature>
<feature type="binding site" evidence="1">
    <location>
        <position position="101"/>
    </location>
    <ligand>
        <name>Zn(2+)</name>
        <dbReference type="ChEBI" id="CHEBI:29105"/>
        <label>2</label>
        <note>structural</note>
    </ligand>
</feature>
<feature type="binding site" evidence="1">
    <location>
        <position position="108"/>
    </location>
    <ligand>
        <name>substrate</name>
    </ligand>
</feature>
<feature type="binding site" evidence="1">
    <location>
        <position position="144"/>
    </location>
    <ligand>
        <name>substrate</name>
    </ligand>
</feature>
<feature type="binding site" evidence="1">
    <location>
        <position position="144"/>
    </location>
    <ligand>
        <name>Zn(2+)</name>
        <dbReference type="ChEBI" id="CHEBI:29105"/>
        <label>1</label>
        <note>catalytic</note>
    </ligand>
</feature>
<feature type="binding site" evidence="1">
    <location>
        <position position="148"/>
    </location>
    <ligand>
        <name>substrate</name>
    </ligand>
</feature>
<feature type="binding site" evidence="1">
    <location>
        <begin position="182"/>
        <end position="185"/>
    </location>
    <ligand>
        <name>NADP(+)</name>
        <dbReference type="ChEBI" id="CHEBI:58349"/>
    </ligand>
</feature>
<feature type="binding site" evidence="1">
    <location>
        <begin position="204"/>
        <end position="206"/>
    </location>
    <ligand>
        <name>NADP(+)</name>
        <dbReference type="ChEBI" id="CHEBI:58349"/>
    </ligand>
</feature>
<feature type="binding site" evidence="1">
    <location>
        <begin position="264"/>
        <end position="266"/>
    </location>
    <ligand>
        <name>NADP(+)</name>
        <dbReference type="ChEBI" id="CHEBI:58349"/>
    </ligand>
</feature>
<feature type="binding site" evidence="1">
    <location>
        <begin position="292"/>
        <end position="294"/>
    </location>
    <ligand>
        <name>NADP(+)</name>
        <dbReference type="ChEBI" id="CHEBI:58349"/>
    </ligand>
</feature>
<feature type="binding site" evidence="1">
    <location>
        <position position="294"/>
    </location>
    <ligand>
        <name>substrate</name>
    </ligand>
</feature>
<feature type="binding site" evidence="1">
    <location>
        <position position="341"/>
    </location>
    <ligand>
        <name>NADP(+)</name>
        <dbReference type="ChEBI" id="CHEBI:58349"/>
    </ligand>
</feature>
<name>GLCD1_PICTO</name>
<evidence type="ECO:0000255" key="1">
    <source>
        <dbReference type="HAMAP-Rule" id="MF_02127"/>
    </source>
</evidence>
<accession>Q6L1C8</accession>